<reference key="1">
    <citation type="submission" date="2008-04" db="EMBL/GenBank/DDBJ databases">
        <title>Complete sequence of chromosome of Exiguobacterium sibiricum 255-15.</title>
        <authorList>
            <consortium name="US DOE Joint Genome Institute"/>
            <person name="Copeland A."/>
            <person name="Lucas S."/>
            <person name="Lapidus A."/>
            <person name="Glavina del Rio T."/>
            <person name="Dalin E."/>
            <person name="Tice H."/>
            <person name="Bruce D."/>
            <person name="Goodwin L."/>
            <person name="Pitluck S."/>
            <person name="Kiss H."/>
            <person name="Chertkov O."/>
            <person name="Monk C."/>
            <person name="Brettin T."/>
            <person name="Detter J.C."/>
            <person name="Han C."/>
            <person name="Kuske C.R."/>
            <person name="Schmutz J."/>
            <person name="Larimer F."/>
            <person name="Land M."/>
            <person name="Hauser L."/>
            <person name="Kyrpides N."/>
            <person name="Mikhailova N."/>
            <person name="Vishnivetskaya T."/>
            <person name="Rodrigues D.F."/>
            <person name="Gilichinsky D."/>
            <person name="Tiedje J."/>
            <person name="Richardson P."/>
        </authorList>
    </citation>
    <scope>NUCLEOTIDE SEQUENCE [LARGE SCALE GENOMIC DNA]</scope>
    <source>
        <strain>DSM 17290 / CCUG 55495 / CIP 109462 / JCM 13490 / 255-15</strain>
    </source>
</reference>
<evidence type="ECO:0000255" key="1">
    <source>
        <dbReference type="HAMAP-Rule" id="MF_00211"/>
    </source>
</evidence>
<accession>B1YLS1</accession>
<name>TRPD_EXIS2</name>
<sequence length="339" mass="36504">MKDVLTKLANANHLRFEEMQQAARELFAEDVTDSEIAAFLIALKAKGETAEELAGLASIMREVAVDIPVSGTDFIDNCGTGGDGSQSFNISTTAAFVLAGAGAKVAKHGNRSVSSKTGSADVLESLGVPLDVSTEEIATLLETNGIAFLFAQRMHPRVKQIMKVRRDLRIPTIFNLIGPLTNPVPLKTQLLGIYREDLLETIALTLHRLGRKRAIVLHGACGMDEASLAGTNQLVLLDQGELIRFSLHPEEVGLSVAPIEAIRGGTAAENAEILLRVLRGEAGPYRDTVLLNAGIALFAEGRVETIREGIERSAESIDSGRALEKLQYLQRMKQQEAIG</sequence>
<organism>
    <name type="scientific">Exiguobacterium sibiricum (strain DSM 17290 / CCUG 55495 / CIP 109462 / JCM 13490 / 255-15)</name>
    <dbReference type="NCBI Taxonomy" id="262543"/>
    <lineage>
        <taxon>Bacteria</taxon>
        <taxon>Bacillati</taxon>
        <taxon>Bacillota</taxon>
        <taxon>Bacilli</taxon>
        <taxon>Bacillales</taxon>
        <taxon>Bacillales Family XII. Incertae Sedis</taxon>
        <taxon>Exiguobacterium</taxon>
    </lineage>
</organism>
<dbReference type="EC" id="2.4.2.18" evidence="1"/>
<dbReference type="EMBL" id="CP001022">
    <property type="protein sequence ID" value="ACB60404.1"/>
    <property type="molecule type" value="Genomic_DNA"/>
</dbReference>
<dbReference type="RefSeq" id="WP_012369828.1">
    <property type="nucleotide sequence ID" value="NC_010556.1"/>
</dbReference>
<dbReference type="SMR" id="B1YLS1"/>
<dbReference type="STRING" id="262543.Exig_0924"/>
<dbReference type="KEGG" id="esi:Exig_0924"/>
<dbReference type="eggNOG" id="COG0547">
    <property type="taxonomic scope" value="Bacteria"/>
</dbReference>
<dbReference type="HOGENOM" id="CLU_034315_2_1_9"/>
<dbReference type="OrthoDB" id="9806430at2"/>
<dbReference type="UniPathway" id="UPA00035">
    <property type="reaction ID" value="UER00041"/>
</dbReference>
<dbReference type="Proteomes" id="UP000001681">
    <property type="component" value="Chromosome"/>
</dbReference>
<dbReference type="GO" id="GO:0005829">
    <property type="term" value="C:cytosol"/>
    <property type="evidence" value="ECO:0007669"/>
    <property type="project" value="TreeGrafter"/>
</dbReference>
<dbReference type="GO" id="GO:0004048">
    <property type="term" value="F:anthranilate phosphoribosyltransferase activity"/>
    <property type="evidence" value="ECO:0007669"/>
    <property type="project" value="UniProtKB-UniRule"/>
</dbReference>
<dbReference type="GO" id="GO:0000287">
    <property type="term" value="F:magnesium ion binding"/>
    <property type="evidence" value="ECO:0007669"/>
    <property type="project" value="UniProtKB-UniRule"/>
</dbReference>
<dbReference type="GO" id="GO:0000162">
    <property type="term" value="P:L-tryptophan biosynthetic process"/>
    <property type="evidence" value="ECO:0007669"/>
    <property type="project" value="UniProtKB-UniRule"/>
</dbReference>
<dbReference type="FunFam" id="3.40.1030.10:FF:000002">
    <property type="entry name" value="Anthranilate phosphoribosyltransferase"/>
    <property type="match status" value="1"/>
</dbReference>
<dbReference type="Gene3D" id="3.40.1030.10">
    <property type="entry name" value="Nucleoside phosphorylase/phosphoribosyltransferase catalytic domain"/>
    <property type="match status" value="1"/>
</dbReference>
<dbReference type="Gene3D" id="1.20.970.10">
    <property type="entry name" value="Transferase, Pyrimidine Nucleoside Phosphorylase, Chain C"/>
    <property type="match status" value="1"/>
</dbReference>
<dbReference type="HAMAP" id="MF_00211">
    <property type="entry name" value="TrpD"/>
    <property type="match status" value="1"/>
</dbReference>
<dbReference type="InterPro" id="IPR005940">
    <property type="entry name" value="Anthranilate_Pribosyl_Tfrase"/>
</dbReference>
<dbReference type="InterPro" id="IPR000312">
    <property type="entry name" value="Glycosyl_Trfase_fam3"/>
</dbReference>
<dbReference type="InterPro" id="IPR017459">
    <property type="entry name" value="Glycosyl_Trfase_fam3_N_dom"/>
</dbReference>
<dbReference type="InterPro" id="IPR036320">
    <property type="entry name" value="Glycosyl_Trfase_fam3_N_dom_sf"/>
</dbReference>
<dbReference type="InterPro" id="IPR035902">
    <property type="entry name" value="Nuc_phospho_transferase"/>
</dbReference>
<dbReference type="NCBIfam" id="TIGR01245">
    <property type="entry name" value="trpD"/>
    <property type="match status" value="1"/>
</dbReference>
<dbReference type="PANTHER" id="PTHR43285">
    <property type="entry name" value="ANTHRANILATE PHOSPHORIBOSYLTRANSFERASE"/>
    <property type="match status" value="1"/>
</dbReference>
<dbReference type="PANTHER" id="PTHR43285:SF2">
    <property type="entry name" value="ANTHRANILATE PHOSPHORIBOSYLTRANSFERASE"/>
    <property type="match status" value="1"/>
</dbReference>
<dbReference type="Pfam" id="PF02885">
    <property type="entry name" value="Glycos_trans_3N"/>
    <property type="match status" value="1"/>
</dbReference>
<dbReference type="Pfam" id="PF00591">
    <property type="entry name" value="Glycos_transf_3"/>
    <property type="match status" value="1"/>
</dbReference>
<dbReference type="SUPFAM" id="SSF52418">
    <property type="entry name" value="Nucleoside phosphorylase/phosphoribosyltransferase catalytic domain"/>
    <property type="match status" value="1"/>
</dbReference>
<dbReference type="SUPFAM" id="SSF47648">
    <property type="entry name" value="Nucleoside phosphorylase/phosphoribosyltransferase N-terminal domain"/>
    <property type="match status" value="1"/>
</dbReference>
<proteinExistence type="inferred from homology"/>
<protein>
    <recommendedName>
        <fullName evidence="1">Anthranilate phosphoribosyltransferase</fullName>
        <ecNumber evidence="1">2.4.2.18</ecNumber>
    </recommendedName>
</protein>
<comment type="function">
    <text evidence="1">Catalyzes the transfer of the phosphoribosyl group of 5-phosphorylribose-1-pyrophosphate (PRPP) to anthranilate to yield N-(5'-phosphoribosyl)-anthranilate (PRA).</text>
</comment>
<comment type="catalytic activity">
    <reaction evidence="1">
        <text>N-(5-phospho-beta-D-ribosyl)anthranilate + diphosphate = 5-phospho-alpha-D-ribose 1-diphosphate + anthranilate</text>
        <dbReference type="Rhea" id="RHEA:11768"/>
        <dbReference type="ChEBI" id="CHEBI:16567"/>
        <dbReference type="ChEBI" id="CHEBI:18277"/>
        <dbReference type="ChEBI" id="CHEBI:33019"/>
        <dbReference type="ChEBI" id="CHEBI:58017"/>
        <dbReference type="EC" id="2.4.2.18"/>
    </reaction>
</comment>
<comment type="cofactor">
    <cofactor evidence="1">
        <name>Mg(2+)</name>
        <dbReference type="ChEBI" id="CHEBI:18420"/>
    </cofactor>
    <text evidence="1">Binds 2 magnesium ions per monomer.</text>
</comment>
<comment type="pathway">
    <text evidence="1">Amino-acid biosynthesis; L-tryptophan biosynthesis; L-tryptophan from chorismate: step 2/5.</text>
</comment>
<comment type="subunit">
    <text evidence="1">Homodimer.</text>
</comment>
<comment type="similarity">
    <text evidence="1">Belongs to the anthranilate phosphoribosyltransferase family.</text>
</comment>
<gene>
    <name evidence="1" type="primary">trpD</name>
    <name type="ordered locus">Exig_0924</name>
</gene>
<keyword id="KW-0028">Amino-acid biosynthesis</keyword>
<keyword id="KW-0057">Aromatic amino acid biosynthesis</keyword>
<keyword id="KW-0328">Glycosyltransferase</keyword>
<keyword id="KW-0460">Magnesium</keyword>
<keyword id="KW-0479">Metal-binding</keyword>
<keyword id="KW-1185">Reference proteome</keyword>
<keyword id="KW-0808">Transferase</keyword>
<keyword id="KW-0822">Tryptophan biosynthesis</keyword>
<feature type="chain" id="PRO_1000099802" description="Anthranilate phosphoribosyltransferase">
    <location>
        <begin position="1"/>
        <end position="339"/>
    </location>
</feature>
<feature type="binding site" evidence="1">
    <location>
        <position position="79"/>
    </location>
    <ligand>
        <name>5-phospho-alpha-D-ribose 1-diphosphate</name>
        <dbReference type="ChEBI" id="CHEBI:58017"/>
    </ligand>
</feature>
<feature type="binding site" evidence="1">
    <location>
        <position position="79"/>
    </location>
    <ligand>
        <name>anthranilate</name>
        <dbReference type="ChEBI" id="CHEBI:16567"/>
        <label>1</label>
    </ligand>
</feature>
<feature type="binding site" evidence="1">
    <location>
        <begin position="82"/>
        <end position="83"/>
    </location>
    <ligand>
        <name>5-phospho-alpha-D-ribose 1-diphosphate</name>
        <dbReference type="ChEBI" id="CHEBI:58017"/>
    </ligand>
</feature>
<feature type="binding site" evidence="1">
    <location>
        <position position="87"/>
    </location>
    <ligand>
        <name>5-phospho-alpha-D-ribose 1-diphosphate</name>
        <dbReference type="ChEBI" id="CHEBI:58017"/>
    </ligand>
</feature>
<feature type="binding site" evidence="1">
    <location>
        <begin position="89"/>
        <end position="92"/>
    </location>
    <ligand>
        <name>5-phospho-alpha-D-ribose 1-diphosphate</name>
        <dbReference type="ChEBI" id="CHEBI:58017"/>
    </ligand>
</feature>
<feature type="binding site" evidence="1">
    <location>
        <position position="91"/>
    </location>
    <ligand>
        <name>Mg(2+)</name>
        <dbReference type="ChEBI" id="CHEBI:18420"/>
        <label>1</label>
    </ligand>
</feature>
<feature type="binding site" evidence="1">
    <location>
        <begin position="107"/>
        <end position="115"/>
    </location>
    <ligand>
        <name>5-phospho-alpha-D-ribose 1-diphosphate</name>
        <dbReference type="ChEBI" id="CHEBI:58017"/>
    </ligand>
</feature>
<feature type="binding site" evidence="1">
    <location>
        <position position="110"/>
    </location>
    <ligand>
        <name>anthranilate</name>
        <dbReference type="ChEBI" id="CHEBI:16567"/>
        <label>1</label>
    </ligand>
</feature>
<feature type="binding site" evidence="1">
    <location>
        <position position="119"/>
    </location>
    <ligand>
        <name>5-phospho-alpha-D-ribose 1-diphosphate</name>
        <dbReference type="ChEBI" id="CHEBI:58017"/>
    </ligand>
</feature>
<feature type="binding site" evidence="1">
    <location>
        <position position="165"/>
    </location>
    <ligand>
        <name>anthranilate</name>
        <dbReference type="ChEBI" id="CHEBI:16567"/>
        <label>2</label>
    </ligand>
</feature>
<feature type="binding site" evidence="1">
    <location>
        <position position="224"/>
    </location>
    <ligand>
        <name>Mg(2+)</name>
        <dbReference type="ChEBI" id="CHEBI:18420"/>
        <label>2</label>
    </ligand>
</feature>
<feature type="binding site" evidence="1">
    <location>
        <position position="225"/>
    </location>
    <ligand>
        <name>Mg(2+)</name>
        <dbReference type="ChEBI" id="CHEBI:18420"/>
        <label>1</label>
    </ligand>
</feature>
<feature type="binding site" evidence="1">
    <location>
        <position position="225"/>
    </location>
    <ligand>
        <name>Mg(2+)</name>
        <dbReference type="ChEBI" id="CHEBI:18420"/>
        <label>2</label>
    </ligand>
</feature>